<organism>
    <name type="scientific">Helicobacter pylori (strain G27)</name>
    <dbReference type="NCBI Taxonomy" id="563041"/>
    <lineage>
        <taxon>Bacteria</taxon>
        <taxon>Pseudomonadati</taxon>
        <taxon>Campylobacterota</taxon>
        <taxon>Epsilonproteobacteria</taxon>
        <taxon>Campylobacterales</taxon>
        <taxon>Helicobacteraceae</taxon>
        <taxon>Helicobacter</taxon>
    </lineage>
</organism>
<accession>B5Z7V2</accession>
<reference key="1">
    <citation type="journal article" date="2009" name="J. Bacteriol.">
        <title>The complete genome sequence of Helicobacter pylori strain G27.</title>
        <authorList>
            <person name="Baltrus D.A."/>
            <person name="Amieva M.R."/>
            <person name="Covacci A."/>
            <person name="Lowe T.M."/>
            <person name="Merrell D.S."/>
            <person name="Ottemann K.M."/>
            <person name="Stein M."/>
            <person name="Salama N.R."/>
            <person name="Guillemin K."/>
        </authorList>
    </citation>
    <scope>NUCLEOTIDE SEQUENCE [LARGE SCALE GENOMIC DNA]</scope>
    <source>
        <strain>G27</strain>
    </source>
</reference>
<comment type="function">
    <text evidence="1">Specifically methylates the pseudouridine at position 1915 (m3Psi1915) in 23S rRNA.</text>
</comment>
<comment type="catalytic activity">
    <reaction evidence="1">
        <text>pseudouridine(1915) in 23S rRNA + S-adenosyl-L-methionine = N(3)-methylpseudouridine(1915) in 23S rRNA + S-adenosyl-L-homocysteine + H(+)</text>
        <dbReference type="Rhea" id="RHEA:42752"/>
        <dbReference type="Rhea" id="RHEA-COMP:10221"/>
        <dbReference type="Rhea" id="RHEA-COMP:10222"/>
        <dbReference type="ChEBI" id="CHEBI:15378"/>
        <dbReference type="ChEBI" id="CHEBI:57856"/>
        <dbReference type="ChEBI" id="CHEBI:59789"/>
        <dbReference type="ChEBI" id="CHEBI:65314"/>
        <dbReference type="ChEBI" id="CHEBI:74486"/>
        <dbReference type="EC" id="2.1.1.177"/>
    </reaction>
</comment>
<comment type="subunit">
    <text evidence="1">Homodimer.</text>
</comment>
<comment type="subcellular location">
    <subcellularLocation>
        <location evidence="1">Cytoplasm</location>
    </subcellularLocation>
</comment>
<comment type="similarity">
    <text evidence="1">Belongs to the RNA methyltransferase RlmH family.</text>
</comment>
<evidence type="ECO:0000255" key="1">
    <source>
        <dbReference type="HAMAP-Rule" id="MF_00658"/>
    </source>
</evidence>
<name>RLMH_HELPG</name>
<sequence length="151" mass="17377">MMRCVVYSIAKSSPLELVKIYQKQCKQFDCELELVDLFPKNTANAQKVSKELAQKSYSLAFEPYLNPKAKNIALHPKAQRGDSFAFSKMLENHLNINFFIAGAYGFEENFLKGCQAWSLSEMTFSHEVAKIVLCEQIYRALSIIFKHPYHK</sequence>
<dbReference type="EC" id="2.1.1.177" evidence="1"/>
<dbReference type="EMBL" id="CP001173">
    <property type="protein sequence ID" value="ACI27651.1"/>
    <property type="molecule type" value="Genomic_DNA"/>
</dbReference>
<dbReference type="SMR" id="B5Z7V2"/>
<dbReference type="KEGG" id="hpg:HPG27_897"/>
<dbReference type="HOGENOM" id="CLU_100552_2_1_7"/>
<dbReference type="Proteomes" id="UP000001735">
    <property type="component" value="Chromosome"/>
</dbReference>
<dbReference type="GO" id="GO:0005737">
    <property type="term" value="C:cytoplasm"/>
    <property type="evidence" value="ECO:0007669"/>
    <property type="project" value="UniProtKB-SubCell"/>
</dbReference>
<dbReference type="GO" id="GO:0070038">
    <property type="term" value="F:rRNA (pseudouridine-N3-)-methyltransferase activity"/>
    <property type="evidence" value="ECO:0007669"/>
    <property type="project" value="UniProtKB-UniRule"/>
</dbReference>
<dbReference type="CDD" id="cd18081">
    <property type="entry name" value="RlmH-like"/>
    <property type="match status" value="1"/>
</dbReference>
<dbReference type="Gene3D" id="3.40.1280.10">
    <property type="match status" value="1"/>
</dbReference>
<dbReference type="HAMAP" id="MF_00658">
    <property type="entry name" value="23SrRNA_methyltr_H"/>
    <property type="match status" value="1"/>
</dbReference>
<dbReference type="InterPro" id="IPR029028">
    <property type="entry name" value="Alpha/beta_knot_MTases"/>
</dbReference>
<dbReference type="InterPro" id="IPR003742">
    <property type="entry name" value="RlmH-like"/>
</dbReference>
<dbReference type="InterPro" id="IPR029026">
    <property type="entry name" value="tRNA_m1G_MTases_N"/>
</dbReference>
<dbReference type="NCBIfam" id="NF000987">
    <property type="entry name" value="PRK00103.2-1"/>
    <property type="match status" value="1"/>
</dbReference>
<dbReference type="PANTHER" id="PTHR33603">
    <property type="entry name" value="METHYLTRANSFERASE"/>
    <property type="match status" value="1"/>
</dbReference>
<dbReference type="PANTHER" id="PTHR33603:SF1">
    <property type="entry name" value="RIBOSOMAL RNA LARGE SUBUNIT METHYLTRANSFERASE H"/>
    <property type="match status" value="1"/>
</dbReference>
<dbReference type="Pfam" id="PF02590">
    <property type="entry name" value="SPOUT_MTase"/>
    <property type="match status" value="1"/>
</dbReference>
<dbReference type="PIRSF" id="PIRSF004505">
    <property type="entry name" value="MT_bac"/>
    <property type="match status" value="1"/>
</dbReference>
<dbReference type="SUPFAM" id="SSF75217">
    <property type="entry name" value="alpha/beta knot"/>
    <property type="match status" value="1"/>
</dbReference>
<gene>
    <name evidence="1" type="primary">rlmH</name>
    <name type="ordered locus">HPG27_897</name>
</gene>
<keyword id="KW-0963">Cytoplasm</keyword>
<keyword id="KW-0489">Methyltransferase</keyword>
<keyword id="KW-1185">Reference proteome</keyword>
<keyword id="KW-0698">rRNA processing</keyword>
<keyword id="KW-0949">S-adenosyl-L-methionine</keyword>
<keyword id="KW-0808">Transferase</keyword>
<protein>
    <recommendedName>
        <fullName evidence="1">Ribosomal RNA large subunit methyltransferase H</fullName>
        <ecNumber evidence="1">2.1.1.177</ecNumber>
    </recommendedName>
    <alternativeName>
        <fullName evidence="1">23S rRNA (pseudouridine1915-N3)-methyltransferase</fullName>
    </alternativeName>
    <alternativeName>
        <fullName evidence="1">23S rRNA m3Psi1915 methyltransferase</fullName>
    </alternativeName>
    <alternativeName>
        <fullName evidence="1">rRNA (pseudouridine-N3-)-methyltransferase RlmH</fullName>
    </alternativeName>
</protein>
<feature type="chain" id="PRO_0000366606" description="Ribosomal RNA large subunit methyltransferase H">
    <location>
        <begin position="1"/>
        <end position="151"/>
    </location>
</feature>
<feature type="binding site" evidence="1">
    <location>
        <position position="101"/>
    </location>
    <ligand>
        <name>S-adenosyl-L-methionine</name>
        <dbReference type="ChEBI" id="CHEBI:59789"/>
    </ligand>
</feature>
<feature type="binding site" evidence="1">
    <location>
        <begin position="119"/>
        <end position="124"/>
    </location>
    <ligand>
        <name>S-adenosyl-L-methionine</name>
        <dbReference type="ChEBI" id="CHEBI:59789"/>
    </ligand>
</feature>
<proteinExistence type="inferred from homology"/>